<sequence length="557" mass="65588">MPERDSEPFSNPLAPDGHDVDDPHSFHQSKLTNEDFRKLLMTPRAAPTSAPPSKSRHHEMPREYNEDEDPAARRRKKKSYYAKLRQQEIERERELAEKYRDRAKERRDGVNKDYEETELISTTANYRAVGPTAEADKSAAEKRRQLIQESKFLGGDMEHTHLVKGLDFALLQKVRAEIASKEKEEEELMEKPQKETKKDEDPENKIEFKTRLGRNVYRMLFKSKSYERNELFLPGRMAYVVDLDDEYADTDIPTTLIRSKADCPTMEAQTTLTTNDIVISKLTQILSYLRQGTRNKKLKKKDKGKLEEKKPPEADMNIFEDIGDYVPSTTKTPRDKERERYRERERDRERDRDRERDRERDRERERERDREREREEEKKRHSYFEKPKVDDEPMDVDKGPGSAKELIKSINEKFAGSAGWEGTESLKKPEDKKQLGDFFGMSNSYAECYPATMDDMAVDSDEEVDYSKMDQGNKKGPLGRWDFDTQEEYSEYMNNKEALPKAAFQYGIKMSEGRKTRRFKETNDKAELDRQWKKISAIIEKRKKMEADGVEVKRPKY</sequence>
<keyword id="KW-0007">Acetylation</keyword>
<keyword id="KW-0158">Chromosome</keyword>
<keyword id="KW-0963">Cytoplasm</keyword>
<keyword id="KW-0206">Cytoskeleton</keyword>
<keyword id="KW-0903">Direct protein sequencing</keyword>
<keyword id="KW-1017">Isopeptide bond</keyword>
<keyword id="KW-0507">mRNA processing</keyword>
<keyword id="KW-0508">mRNA splicing</keyword>
<keyword id="KW-0539">Nucleus</keyword>
<keyword id="KW-0597">Phosphoprotein</keyword>
<keyword id="KW-1185">Reference proteome</keyword>
<keyword id="KW-0677">Repeat</keyword>
<keyword id="KW-0747">Spliceosome</keyword>
<keyword id="KW-0832">Ubl conjugation</keyword>
<comment type="function">
    <text evidence="1">Involved in pre-mRNA splicing as a component of the spliceosome. Auxiliary spliceosomal protein that regulates selection of alternative splice sites in a small set of target pre-mRNA species. Required for normal mitotic cell cycle progression. Recruits MAD1L1 and MAD2L1 to kinetochores, and is required to trigger the spindle assembly checkpoint. Required for normal accumulation of SMU1.</text>
</comment>
<comment type="subunit">
    <text evidence="1">Component of the spliceosome B complex. Interacts with SMU1. Interacts with MAD1L1. May interact with DHX15.</text>
</comment>
<comment type="subcellular location">
    <subcellularLocation>
        <location evidence="1">Nucleus</location>
    </subcellularLocation>
    <subcellularLocation>
        <location evidence="1">Nucleus</location>
        <location evidence="1">Nucleoplasm</location>
    </subcellularLocation>
    <subcellularLocation>
        <location evidence="1">Chromosome</location>
    </subcellularLocation>
    <subcellularLocation>
        <location evidence="1">Cytoplasm</location>
        <location evidence="1">Cytoskeleton</location>
        <location evidence="1">Spindle pole</location>
    </subcellularLocation>
    <text evidence="1">Predominantly present throughout the nucleoplasm during prometaphase, metaphase and anaphase. Is also detected in nuclear foci that are not identical with Cajal bodies. Starts to accumulate at chromosomes during telophase, and is nearly exclusively associated with chromosomes in newly divided cells. Colocalizes with MAD1L1 at mitotic spindle poles during metaphase and anaphase.</text>
</comment>
<comment type="similarity">
    <text evidence="4">Belongs to the RED family.</text>
</comment>
<dbReference type="EMBL" id="BC081870">
    <property type="protein sequence ID" value="AAH81870.1"/>
    <property type="molecule type" value="mRNA"/>
</dbReference>
<dbReference type="RefSeq" id="NP_001005537.1">
    <property type="nucleotide sequence ID" value="NM_001005537.1"/>
</dbReference>
<dbReference type="SMR" id="Q66HG8"/>
<dbReference type="FunCoup" id="Q66HG8">
    <property type="interactions" value="3683"/>
</dbReference>
<dbReference type="GlyGen" id="Q66HG8">
    <property type="glycosylation" value="1 site"/>
</dbReference>
<dbReference type="iPTMnet" id="Q66HG8"/>
<dbReference type="PhosphoSitePlus" id="Q66HG8"/>
<dbReference type="jPOST" id="Q66HG8"/>
<dbReference type="PaxDb" id="10116-ENSRNOP00000012906"/>
<dbReference type="GeneID" id="291659"/>
<dbReference type="KEGG" id="rno:291659"/>
<dbReference type="UCSC" id="RGD:1359352">
    <property type="organism name" value="rat"/>
</dbReference>
<dbReference type="AGR" id="RGD:1359352"/>
<dbReference type="CTD" id="3550"/>
<dbReference type="RGD" id="1359352">
    <property type="gene designation" value="Ik"/>
</dbReference>
<dbReference type="eggNOG" id="KOG2498">
    <property type="taxonomic scope" value="Eukaryota"/>
</dbReference>
<dbReference type="InParanoid" id="Q66HG8"/>
<dbReference type="OrthoDB" id="77760at9989"/>
<dbReference type="Reactome" id="R-RNO-72163">
    <property type="pathway name" value="mRNA Splicing - Major Pathway"/>
</dbReference>
<dbReference type="PRO" id="PR:Q66HG8"/>
<dbReference type="Proteomes" id="UP000002494">
    <property type="component" value="Unplaced"/>
</dbReference>
<dbReference type="GO" id="GO:0005737">
    <property type="term" value="C:cytoplasm"/>
    <property type="evidence" value="ECO:0007669"/>
    <property type="project" value="UniProtKB-KW"/>
</dbReference>
<dbReference type="GO" id="GO:0097431">
    <property type="term" value="C:mitotic spindle pole"/>
    <property type="evidence" value="ECO:0000266"/>
    <property type="project" value="RGD"/>
</dbReference>
<dbReference type="GO" id="GO:0000228">
    <property type="term" value="C:nuclear chromosome"/>
    <property type="evidence" value="ECO:0000266"/>
    <property type="project" value="RGD"/>
</dbReference>
<dbReference type="GO" id="GO:0005654">
    <property type="term" value="C:nucleoplasm"/>
    <property type="evidence" value="ECO:0000250"/>
    <property type="project" value="UniProtKB"/>
</dbReference>
<dbReference type="GO" id="GO:0005634">
    <property type="term" value="C:nucleus"/>
    <property type="evidence" value="ECO:0000250"/>
    <property type="project" value="UniProtKB"/>
</dbReference>
<dbReference type="GO" id="GO:0071005">
    <property type="term" value="C:U2-type precatalytic spliceosome"/>
    <property type="evidence" value="ECO:0000250"/>
    <property type="project" value="UniProtKB"/>
</dbReference>
<dbReference type="GO" id="GO:0042802">
    <property type="term" value="F:identical protein binding"/>
    <property type="evidence" value="ECO:0000266"/>
    <property type="project" value="RGD"/>
</dbReference>
<dbReference type="GO" id="GO:0000278">
    <property type="term" value="P:mitotic cell cycle"/>
    <property type="evidence" value="ECO:0000250"/>
    <property type="project" value="UniProtKB"/>
</dbReference>
<dbReference type="GO" id="GO:0007094">
    <property type="term" value="P:mitotic spindle assembly checkpoint signaling"/>
    <property type="evidence" value="ECO:0000250"/>
    <property type="project" value="UniProtKB"/>
</dbReference>
<dbReference type="GO" id="GO:0000398">
    <property type="term" value="P:mRNA splicing, via spliceosome"/>
    <property type="evidence" value="ECO:0000250"/>
    <property type="project" value="UniProtKB"/>
</dbReference>
<dbReference type="GO" id="GO:0034501">
    <property type="term" value="P:protein localization to kinetochore"/>
    <property type="evidence" value="ECO:0000250"/>
    <property type="project" value="UniProtKB"/>
</dbReference>
<dbReference type="InterPro" id="IPR039896">
    <property type="entry name" value="Red-like"/>
</dbReference>
<dbReference type="InterPro" id="IPR012492">
    <property type="entry name" value="RED_C"/>
</dbReference>
<dbReference type="InterPro" id="IPR012916">
    <property type="entry name" value="RED_N"/>
</dbReference>
<dbReference type="PANTHER" id="PTHR12765">
    <property type="entry name" value="RED PROTEIN IK FACTOR CYTOKINE IK"/>
    <property type="match status" value="1"/>
</dbReference>
<dbReference type="Pfam" id="PF07807">
    <property type="entry name" value="RED_C"/>
    <property type="match status" value="1"/>
</dbReference>
<dbReference type="Pfam" id="PF07808">
    <property type="entry name" value="RED_N"/>
    <property type="match status" value="1"/>
</dbReference>
<name>RED_RAT</name>
<reference key="1">
    <citation type="journal article" date="2004" name="Genome Res.">
        <title>The status, quality, and expansion of the NIH full-length cDNA project: the Mammalian Gene Collection (MGC).</title>
        <authorList>
            <consortium name="The MGC Project Team"/>
        </authorList>
    </citation>
    <scope>NUCLEOTIDE SEQUENCE [LARGE SCALE MRNA]</scope>
    <source>
        <tissue>Kidney</tissue>
    </source>
</reference>
<reference key="2">
    <citation type="submission" date="2007-04" db="UniProtKB">
        <authorList>
            <person name="Lubec G."/>
            <person name="Diao W."/>
            <person name="Chen W.-Q."/>
        </authorList>
    </citation>
    <scope>PROTEIN SEQUENCE OF 108-127; 165-173; 229-236; 282-290; 310-331 AND 535-541</scope>
    <scope>IDENTIFICATION BY MASS SPECTROMETRY</scope>
    <source>
        <strain>Sprague-Dawley</strain>
        <tissue>Hippocampus</tissue>
    </source>
</reference>
<protein>
    <recommendedName>
        <fullName>Protein Red</fullName>
    </recommendedName>
    <alternativeName>
        <fullName>Cytokine IK</fullName>
    </alternativeName>
    <alternativeName>
        <fullName>IK factor</fullName>
    </alternativeName>
</protein>
<accession>Q66HG8</accession>
<evidence type="ECO:0000250" key="1">
    <source>
        <dbReference type="UniProtKB" id="Q13123"/>
    </source>
</evidence>
<evidence type="ECO:0000250" key="2">
    <source>
        <dbReference type="UniProtKB" id="Q9Z1M8"/>
    </source>
</evidence>
<evidence type="ECO:0000256" key="3">
    <source>
        <dbReference type="SAM" id="MobiDB-lite"/>
    </source>
</evidence>
<evidence type="ECO:0000305" key="4"/>
<feature type="chain" id="PRO_0000288497" description="Protein Red">
    <location>
        <begin position="1"/>
        <end position="557"/>
    </location>
</feature>
<feature type="repeat" description="1">
    <location>
        <begin position="342"/>
        <end position="343"/>
    </location>
</feature>
<feature type="repeat" description="2">
    <location>
        <begin position="344"/>
        <end position="345"/>
    </location>
</feature>
<feature type="repeat" description="3">
    <location>
        <begin position="346"/>
        <end position="347"/>
    </location>
</feature>
<feature type="repeat" description="4">
    <location>
        <begin position="348"/>
        <end position="349"/>
    </location>
</feature>
<feature type="repeat" description="5">
    <location>
        <begin position="350"/>
        <end position="351"/>
    </location>
</feature>
<feature type="repeat" description="6">
    <location>
        <begin position="352"/>
        <end position="353"/>
    </location>
</feature>
<feature type="repeat" description="7">
    <location>
        <begin position="354"/>
        <end position="355"/>
    </location>
</feature>
<feature type="repeat" description="8">
    <location>
        <begin position="356"/>
        <end position="357"/>
    </location>
</feature>
<feature type="repeat" description="9">
    <location>
        <begin position="358"/>
        <end position="359"/>
    </location>
</feature>
<feature type="repeat" description="10">
    <location>
        <begin position="360"/>
        <end position="361"/>
    </location>
</feature>
<feature type="repeat" description="11">
    <location>
        <begin position="362"/>
        <end position="363"/>
    </location>
</feature>
<feature type="repeat" description="12">
    <location>
        <begin position="364"/>
        <end position="365"/>
    </location>
</feature>
<feature type="repeat" description="13">
    <location>
        <begin position="366"/>
        <end position="367"/>
    </location>
</feature>
<feature type="repeat" description="14">
    <location>
        <begin position="368"/>
        <end position="369"/>
    </location>
</feature>
<feature type="repeat" description="15">
    <location>
        <begin position="370"/>
        <end position="371"/>
    </location>
</feature>
<feature type="repeat" description="16">
    <location>
        <begin position="372"/>
        <end position="373"/>
    </location>
</feature>
<feature type="repeat" description="17">
    <location>
        <begin position="374"/>
        <end position="375"/>
    </location>
</feature>
<feature type="region of interest" description="Disordered" evidence="3">
    <location>
        <begin position="1"/>
        <end position="90"/>
    </location>
</feature>
<feature type="region of interest" description="Disordered" evidence="3">
    <location>
        <begin position="181"/>
        <end position="205"/>
    </location>
</feature>
<feature type="region of interest" description="Disordered" evidence="3">
    <location>
        <begin position="294"/>
        <end position="402"/>
    </location>
</feature>
<feature type="region of interest" description="17 X 2 AA tandem repeats of R-[ED]">
    <location>
        <begin position="342"/>
        <end position="375"/>
    </location>
</feature>
<feature type="compositionally biased region" description="Basic and acidic residues" evidence="3">
    <location>
        <begin position="16"/>
        <end position="25"/>
    </location>
</feature>
<feature type="compositionally biased region" description="Low complexity" evidence="3">
    <location>
        <begin position="42"/>
        <end position="53"/>
    </location>
</feature>
<feature type="compositionally biased region" description="Basic residues" evidence="3">
    <location>
        <begin position="294"/>
        <end position="303"/>
    </location>
</feature>
<feature type="compositionally biased region" description="Basic and acidic residues" evidence="3">
    <location>
        <begin position="304"/>
        <end position="313"/>
    </location>
</feature>
<feature type="compositionally biased region" description="Basic and acidic residues" evidence="3">
    <location>
        <begin position="332"/>
        <end position="398"/>
    </location>
</feature>
<feature type="modified residue" description="N6-acetyllysine" evidence="1">
    <location>
        <position position="98"/>
    </location>
</feature>
<feature type="modified residue" description="N6-acetyllysine" evidence="2">
    <location>
        <position position="137"/>
    </location>
</feature>
<feature type="modified residue" description="Phosphoserine" evidence="1">
    <location>
        <position position="287"/>
    </location>
</feature>
<feature type="modified residue" description="Phosphoserine" evidence="1">
    <location>
        <position position="417"/>
    </location>
</feature>
<feature type="modified residue" description="Phosphoserine" evidence="1">
    <location>
        <position position="460"/>
    </location>
</feature>
<feature type="modified residue" description="Phosphothreonine" evidence="1">
    <location>
        <position position="485"/>
    </location>
</feature>
<feature type="modified residue" description="Phosphoserine" evidence="1">
    <location>
        <position position="536"/>
    </location>
</feature>
<feature type="cross-link" description="Glycyl lysine isopeptide (Lys-Gly) (interchain with G-Cter in SUMO2)" evidence="1">
    <location>
        <position position="151"/>
    </location>
</feature>
<feature type="cross-link" description="Glycyl lysine isopeptide (Lys-Gly) (interchain with G-Cter in SUMO2)" evidence="1">
    <location>
        <position position="310"/>
    </location>
</feature>
<feature type="cross-link" description="Glycyl lysine isopeptide (Lys-Gly) (interchain with G-Cter in SUMO2)" evidence="1">
    <location>
        <position position="331"/>
    </location>
</feature>
<feature type="cross-link" description="Glycyl lysine isopeptide (Lys-Gly) (interchain with G-Cter in SUMO2)" evidence="1">
    <location>
        <position position="386"/>
    </location>
</feature>
<feature type="cross-link" description="Glycyl lysine isopeptide (Lys-Gly) (interchain with G-Cter in SUMO2)" evidence="1">
    <location>
        <position position="388"/>
    </location>
</feature>
<feature type="cross-link" description="Glycyl lysine isopeptide (Lys-Gly) (interchain with G-Cter in SUMO2)" evidence="1">
    <location>
        <position position="404"/>
    </location>
</feature>
<feature type="cross-link" description="Glycyl lysine isopeptide (Lys-Gly) (interchain with G-Cter in SUMO2)" evidence="1">
    <location>
        <position position="408"/>
    </location>
</feature>
<feature type="cross-link" description="Glycyl lysine isopeptide (Lys-Gly) (interchain with G-Cter in SUMO2)" evidence="1">
    <location>
        <position position="496"/>
    </location>
</feature>
<feature type="cross-link" description="Glycyl lysine isopeptide (Lys-Gly) (interchain with G-Cter in SUMO2)" evidence="1">
    <location>
        <position position="501"/>
    </location>
</feature>
<feature type="cross-link" description="Glycyl lysine isopeptide (Lys-Gly) (interchain with G-Cter in SUMO2)" evidence="1">
    <location>
        <position position="509"/>
    </location>
</feature>
<feature type="cross-link" description="Glycyl lysine isopeptide (Lys-Gly) (interchain with G-Cter in SUMO2)" evidence="1">
    <location>
        <position position="541"/>
    </location>
</feature>
<feature type="cross-link" description="Glycyl lysine isopeptide (Lys-Gly) (interchain with G-Cter in SUMO2)" evidence="1">
    <location>
        <position position="543"/>
    </location>
</feature>
<feature type="cross-link" description="Glycyl lysine isopeptide (Lys-Gly) (interchain with G-Cter in SUMO2)" evidence="1">
    <location>
        <position position="544"/>
    </location>
</feature>
<feature type="cross-link" description="Glycyl lysine isopeptide (Lys-Gly) (interchain with G-Cter in SUMO2)" evidence="1">
    <location>
        <position position="553"/>
    </location>
</feature>
<organism>
    <name type="scientific">Rattus norvegicus</name>
    <name type="common">Rat</name>
    <dbReference type="NCBI Taxonomy" id="10116"/>
    <lineage>
        <taxon>Eukaryota</taxon>
        <taxon>Metazoa</taxon>
        <taxon>Chordata</taxon>
        <taxon>Craniata</taxon>
        <taxon>Vertebrata</taxon>
        <taxon>Euteleostomi</taxon>
        <taxon>Mammalia</taxon>
        <taxon>Eutheria</taxon>
        <taxon>Euarchontoglires</taxon>
        <taxon>Glires</taxon>
        <taxon>Rodentia</taxon>
        <taxon>Myomorpha</taxon>
        <taxon>Muroidea</taxon>
        <taxon>Muridae</taxon>
        <taxon>Murinae</taxon>
        <taxon>Rattus</taxon>
    </lineage>
</organism>
<gene>
    <name type="primary">Ik</name>
</gene>
<proteinExistence type="evidence at protein level"/>